<protein>
    <recommendedName>
        <fullName evidence="2">Purine nucleoside phosphorylase DeoD-type</fullName>
        <shortName evidence="2">PNP</shortName>
        <ecNumber evidence="2">2.4.2.1</ecNumber>
    </recommendedName>
</protein>
<feature type="chain" id="PRO_1000186170" description="Purine nucleoside phosphorylase DeoD-type">
    <location>
        <begin position="1"/>
        <end position="234"/>
    </location>
</feature>
<feature type="active site" description="Proton donor" evidence="2">
    <location>
        <position position="203"/>
    </location>
</feature>
<feature type="binding site" evidence="1">
    <location>
        <position position="4"/>
    </location>
    <ligand>
        <name>a purine D-ribonucleoside</name>
        <dbReference type="ChEBI" id="CHEBI:142355"/>
        <note>ligand shared between dimeric partners</note>
    </ligand>
</feature>
<feature type="binding site" description="in other chain" evidence="1">
    <location>
        <position position="20"/>
    </location>
    <ligand>
        <name>phosphate</name>
        <dbReference type="ChEBI" id="CHEBI:43474"/>
        <note>ligand shared between dimeric partners</note>
    </ligand>
</feature>
<feature type="binding site" description="in other chain" evidence="1">
    <location>
        <position position="24"/>
    </location>
    <ligand>
        <name>phosphate</name>
        <dbReference type="ChEBI" id="CHEBI:43474"/>
        <note>ligand shared between dimeric partners</note>
    </ligand>
</feature>
<feature type="binding site" evidence="1">
    <location>
        <position position="43"/>
    </location>
    <ligand>
        <name>phosphate</name>
        <dbReference type="ChEBI" id="CHEBI:43474"/>
        <note>ligand shared between dimeric partners</note>
    </ligand>
</feature>
<feature type="binding site" description="in other chain" evidence="1">
    <location>
        <begin position="87"/>
        <end position="90"/>
    </location>
    <ligand>
        <name>phosphate</name>
        <dbReference type="ChEBI" id="CHEBI:43474"/>
        <note>ligand shared between dimeric partners</note>
    </ligand>
</feature>
<feature type="binding site" description="in other chain" evidence="1">
    <location>
        <position position="162"/>
    </location>
    <ligand>
        <name>a purine D-ribonucleoside</name>
        <dbReference type="ChEBI" id="CHEBI:142355"/>
        <note>ligand shared between dimeric partners</note>
    </ligand>
</feature>
<feature type="binding site" description="in other chain" evidence="1">
    <location>
        <begin position="178"/>
        <end position="180"/>
    </location>
    <ligand>
        <name>a purine D-ribonucleoside</name>
        <dbReference type="ChEBI" id="CHEBI:142355"/>
        <note>ligand shared between dimeric partners</note>
    </ligand>
</feature>
<feature type="binding site" description="in other chain" evidence="1">
    <location>
        <begin position="202"/>
        <end position="203"/>
    </location>
    <ligand>
        <name>a purine D-ribonucleoside</name>
        <dbReference type="ChEBI" id="CHEBI:142355"/>
        <note>ligand shared between dimeric partners</note>
    </ligand>
</feature>
<feature type="site" description="Important for catalytic activity" evidence="2">
    <location>
        <position position="216"/>
    </location>
</feature>
<proteinExistence type="inferred from homology"/>
<evidence type="ECO:0000250" key="1">
    <source>
        <dbReference type="UniProtKB" id="P50389"/>
    </source>
</evidence>
<evidence type="ECO:0000255" key="2">
    <source>
        <dbReference type="HAMAP-Rule" id="MF_01627"/>
    </source>
</evidence>
<organism>
    <name type="scientific">Anoxybacillus flavithermus (strain DSM 21510 / WK1)</name>
    <dbReference type="NCBI Taxonomy" id="491915"/>
    <lineage>
        <taxon>Bacteria</taxon>
        <taxon>Bacillati</taxon>
        <taxon>Bacillota</taxon>
        <taxon>Bacilli</taxon>
        <taxon>Bacillales</taxon>
        <taxon>Anoxybacillaceae</taxon>
        <taxon>Anoxybacillus</taxon>
    </lineage>
</organism>
<dbReference type="EC" id="2.4.2.1" evidence="2"/>
<dbReference type="EMBL" id="CP000922">
    <property type="protein sequence ID" value="ACJ33750.1"/>
    <property type="molecule type" value="Genomic_DNA"/>
</dbReference>
<dbReference type="RefSeq" id="WP_006318575.1">
    <property type="nucleotide sequence ID" value="NC_011567.1"/>
</dbReference>
<dbReference type="SMR" id="B7GKU4"/>
<dbReference type="STRING" id="491915.Aflv_1382"/>
<dbReference type="GeneID" id="7037636"/>
<dbReference type="KEGG" id="afl:Aflv_1382"/>
<dbReference type="eggNOG" id="COG0813">
    <property type="taxonomic scope" value="Bacteria"/>
</dbReference>
<dbReference type="HOGENOM" id="CLU_068457_2_0_9"/>
<dbReference type="Proteomes" id="UP000000742">
    <property type="component" value="Chromosome"/>
</dbReference>
<dbReference type="GO" id="GO:0005829">
    <property type="term" value="C:cytosol"/>
    <property type="evidence" value="ECO:0007669"/>
    <property type="project" value="TreeGrafter"/>
</dbReference>
<dbReference type="GO" id="GO:0004731">
    <property type="term" value="F:purine-nucleoside phosphorylase activity"/>
    <property type="evidence" value="ECO:0007669"/>
    <property type="project" value="UniProtKB-UniRule"/>
</dbReference>
<dbReference type="GO" id="GO:0006152">
    <property type="term" value="P:purine nucleoside catabolic process"/>
    <property type="evidence" value="ECO:0007669"/>
    <property type="project" value="TreeGrafter"/>
</dbReference>
<dbReference type="CDD" id="cd09006">
    <property type="entry name" value="PNP_EcPNPI-like"/>
    <property type="match status" value="1"/>
</dbReference>
<dbReference type="Gene3D" id="3.40.50.1580">
    <property type="entry name" value="Nucleoside phosphorylase domain"/>
    <property type="match status" value="1"/>
</dbReference>
<dbReference type="HAMAP" id="MF_01627">
    <property type="entry name" value="Pur_nucleosid_phosp"/>
    <property type="match status" value="1"/>
</dbReference>
<dbReference type="InterPro" id="IPR004402">
    <property type="entry name" value="DeoD-type"/>
</dbReference>
<dbReference type="InterPro" id="IPR018016">
    <property type="entry name" value="Nucleoside_phosphorylase_CS"/>
</dbReference>
<dbReference type="InterPro" id="IPR000845">
    <property type="entry name" value="Nucleoside_phosphorylase_d"/>
</dbReference>
<dbReference type="InterPro" id="IPR035994">
    <property type="entry name" value="Nucleoside_phosphorylase_sf"/>
</dbReference>
<dbReference type="NCBIfam" id="TIGR00107">
    <property type="entry name" value="deoD"/>
    <property type="match status" value="1"/>
</dbReference>
<dbReference type="NCBIfam" id="NF004489">
    <property type="entry name" value="PRK05819.1"/>
    <property type="match status" value="1"/>
</dbReference>
<dbReference type="PANTHER" id="PTHR43691:SF11">
    <property type="entry name" value="FI09636P-RELATED"/>
    <property type="match status" value="1"/>
</dbReference>
<dbReference type="PANTHER" id="PTHR43691">
    <property type="entry name" value="URIDINE PHOSPHORYLASE"/>
    <property type="match status" value="1"/>
</dbReference>
<dbReference type="Pfam" id="PF01048">
    <property type="entry name" value="PNP_UDP_1"/>
    <property type="match status" value="1"/>
</dbReference>
<dbReference type="SUPFAM" id="SSF53167">
    <property type="entry name" value="Purine and uridine phosphorylases"/>
    <property type="match status" value="1"/>
</dbReference>
<dbReference type="PROSITE" id="PS01232">
    <property type="entry name" value="PNP_UDP_1"/>
    <property type="match status" value="1"/>
</dbReference>
<sequence>MSVHIGAKEHEIADKILLPGDPLRAKYIAETFLEGATCYNQVRGMLGFTGTYKGHRISVQGTGMGVPSISIYVTELMQSYNVQTLIRVGTCGAIQKDVKVRDVILAMTSSTDSQMNRMTFGGIDYAPTANFDLLKTAYEIGKEKGLQLKVGSVFTADMFYNENAQFEKLARYGVLAVEMETTALYTLAAKFGRKALSVLTVSDHILTGEETTAEERQTTFNEMIEVALETAIRQ</sequence>
<name>DEOD_ANOFW</name>
<gene>
    <name evidence="2" type="primary">deoD</name>
    <name type="ordered locus">Aflv_1382</name>
</gene>
<keyword id="KW-0328">Glycosyltransferase</keyword>
<keyword id="KW-0808">Transferase</keyword>
<reference key="1">
    <citation type="journal article" date="2008" name="Genome Biol.">
        <title>Encapsulated in silica: genome, proteome and physiology of the thermophilic bacterium Anoxybacillus flavithermus WK1.</title>
        <authorList>
            <person name="Saw J.H."/>
            <person name="Mountain B.W."/>
            <person name="Feng L."/>
            <person name="Omelchenko M.V."/>
            <person name="Hou S."/>
            <person name="Saito J.A."/>
            <person name="Stott M.B."/>
            <person name="Li D."/>
            <person name="Zhao G."/>
            <person name="Wu J."/>
            <person name="Galperin M.Y."/>
            <person name="Koonin E.V."/>
            <person name="Makarova K.S."/>
            <person name="Wolf Y.I."/>
            <person name="Rigden D.J."/>
            <person name="Dunfield P.F."/>
            <person name="Wang L."/>
            <person name="Alam M."/>
        </authorList>
    </citation>
    <scope>NUCLEOTIDE SEQUENCE [LARGE SCALE GENOMIC DNA]</scope>
    <source>
        <strain>DSM 21510 / WK1</strain>
    </source>
</reference>
<comment type="function">
    <text evidence="2">Catalyzes the reversible phosphorolytic breakdown of the N-glycosidic bond in the beta-(deoxy)ribonucleoside molecules, with the formation of the corresponding free purine bases and pentose-1-phosphate.</text>
</comment>
<comment type="catalytic activity">
    <reaction evidence="2">
        <text>a purine D-ribonucleoside + phosphate = a purine nucleobase + alpha-D-ribose 1-phosphate</text>
        <dbReference type="Rhea" id="RHEA:19805"/>
        <dbReference type="ChEBI" id="CHEBI:26386"/>
        <dbReference type="ChEBI" id="CHEBI:43474"/>
        <dbReference type="ChEBI" id="CHEBI:57720"/>
        <dbReference type="ChEBI" id="CHEBI:142355"/>
        <dbReference type="EC" id="2.4.2.1"/>
    </reaction>
</comment>
<comment type="catalytic activity">
    <reaction evidence="2">
        <text>a purine 2'-deoxy-D-ribonucleoside + phosphate = a purine nucleobase + 2-deoxy-alpha-D-ribose 1-phosphate</text>
        <dbReference type="Rhea" id="RHEA:36431"/>
        <dbReference type="ChEBI" id="CHEBI:26386"/>
        <dbReference type="ChEBI" id="CHEBI:43474"/>
        <dbReference type="ChEBI" id="CHEBI:57259"/>
        <dbReference type="ChEBI" id="CHEBI:142361"/>
        <dbReference type="EC" id="2.4.2.1"/>
    </reaction>
</comment>
<comment type="subunit">
    <text evidence="2">Homohexamer; trimer of homodimers.</text>
</comment>
<comment type="similarity">
    <text evidence="2">Belongs to the PNP/UDP phosphorylase family.</text>
</comment>
<accession>B7GKU4</accession>